<keyword id="KW-0067">ATP-binding</keyword>
<keyword id="KW-0133">Cell shape</keyword>
<keyword id="KW-0961">Cell wall biogenesis/degradation</keyword>
<keyword id="KW-0963">Cytoplasm</keyword>
<keyword id="KW-0436">Ligase</keyword>
<keyword id="KW-0460">Magnesium</keyword>
<keyword id="KW-0464">Manganese</keyword>
<keyword id="KW-0479">Metal-binding</keyword>
<keyword id="KW-0547">Nucleotide-binding</keyword>
<keyword id="KW-0573">Peptidoglycan synthesis</keyword>
<keyword id="KW-1185">Reference proteome</keyword>
<proteinExistence type="inferred from homology"/>
<sequence>MRRDVSSKASPKVAMMMGGTSSERAVSLSSGRECGAALRAEGFEVIDLDAGPDLAARLEDLRPDVVFNALHGRWGEDGCVQGLLEWLRIPYTHSGVLASALAMDKERTKAAYAAAGLPIATSGLFTRAQIAARHVMPPPYVIKPYNEGSSVGVYLVPEGAEAAPELADDLPDTLMVEAFVPGRELTVTVQGDRALCVTDIVTEGWYDYDAKYVPGGSRHVLPAEVPGDVYDACMAHAETAHRVLGCRGISRTDFRWDPRRSLDGLALLETNTQPGMTPTSLTPEQAQHVGLGFGALCRWIVEDASCDR</sequence>
<protein>
    <recommendedName>
        <fullName evidence="2">D-alanine--D-alanine ligase</fullName>
        <ecNumber evidence="2">6.3.2.4</ecNumber>
    </recommendedName>
    <alternativeName>
        <fullName evidence="2">D-Ala-D-Ala ligase</fullName>
    </alternativeName>
    <alternativeName>
        <fullName evidence="2">D-alanylalanine synthetase</fullName>
    </alternativeName>
</protein>
<evidence type="ECO:0000250" key="1"/>
<evidence type="ECO:0000255" key="2">
    <source>
        <dbReference type="HAMAP-Rule" id="MF_00047"/>
    </source>
</evidence>
<comment type="function">
    <text evidence="2">Cell wall formation.</text>
</comment>
<comment type="catalytic activity">
    <reaction evidence="2">
        <text>2 D-alanine + ATP = D-alanyl-D-alanine + ADP + phosphate + H(+)</text>
        <dbReference type="Rhea" id="RHEA:11224"/>
        <dbReference type="ChEBI" id="CHEBI:15378"/>
        <dbReference type="ChEBI" id="CHEBI:30616"/>
        <dbReference type="ChEBI" id="CHEBI:43474"/>
        <dbReference type="ChEBI" id="CHEBI:57416"/>
        <dbReference type="ChEBI" id="CHEBI:57822"/>
        <dbReference type="ChEBI" id="CHEBI:456216"/>
        <dbReference type="EC" id="6.3.2.4"/>
    </reaction>
</comment>
<comment type="cofactor">
    <cofactor evidence="1">
        <name>Mg(2+)</name>
        <dbReference type="ChEBI" id="CHEBI:18420"/>
    </cofactor>
    <cofactor evidence="1">
        <name>Mn(2+)</name>
        <dbReference type="ChEBI" id="CHEBI:29035"/>
    </cofactor>
    <text evidence="1">Binds 2 magnesium or manganese ions per subunit.</text>
</comment>
<comment type="pathway">
    <text evidence="2">Cell wall biogenesis; peptidoglycan biosynthesis.</text>
</comment>
<comment type="subcellular location">
    <subcellularLocation>
        <location evidence="2">Cytoplasm</location>
    </subcellularLocation>
</comment>
<comment type="similarity">
    <text evidence="2">Belongs to the D-alanine--D-alanine ligase family.</text>
</comment>
<name>DDL_DINSH</name>
<reference key="1">
    <citation type="journal article" date="2010" name="ISME J.">
        <title>The complete genome sequence of the algal symbiont Dinoroseobacter shibae: a hitchhiker's guide to life in the sea.</title>
        <authorList>
            <person name="Wagner-Dobler I."/>
            <person name="Ballhausen B."/>
            <person name="Berger M."/>
            <person name="Brinkhoff T."/>
            <person name="Buchholz I."/>
            <person name="Bunk B."/>
            <person name="Cypionka H."/>
            <person name="Daniel R."/>
            <person name="Drepper T."/>
            <person name="Gerdts G."/>
            <person name="Hahnke S."/>
            <person name="Han C."/>
            <person name="Jahn D."/>
            <person name="Kalhoefer D."/>
            <person name="Kiss H."/>
            <person name="Klenk H.P."/>
            <person name="Kyrpides N."/>
            <person name="Liebl W."/>
            <person name="Liesegang H."/>
            <person name="Meincke L."/>
            <person name="Pati A."/>
            <person name="Petersen J."/>
            <person name="Piekarski T."/>
            <person name="Pommerenke C."/>
            <person name="Pradella S."/>
            <person name="Pukall R."/>
            <person name="Rabus R."/>
            <person name="Stackebrandt E."/>
            <person name="Thole S."/>
            <person name="Thompson L."/>
            <person name="Tielen P."/>
            <person name="Tomasch J."/>
            <person name="von Jan M."/>
            <person name="Wanphrut N."/>
            <person name="Wichels A."/>
            <person name="Zech H."/>
            <person name="Simon M."/>
        </authorList>
    </citation>
    <scope>NUCLEOTIDE SEQUENCE [LARGE SCALE GENOMIC DNA]</scope>
    <source>
        <strain>DSM 16493 / NCIMB 14021 / DFL 12</strain>
    </source>
</reference>
<dbReference type="EC" id="6.3.2.4" evidence="2"/>
<dbReference type="EMBL" id="CP000830">
    <property type="protein sequence ID" value="ABV94153.1"/>
    <property type="molecule type" value="Genomic_DNA"/>
</dbReference>
<dbReference type="RefSeq" id="WP_012179084.1">
    <property type="nucleotide sequence ID" value="NC_009952.1"/>
</dbReference>
<dbReference type="SMR" id="A8LS60"/>
<dbReference type="STRING" id="398580.Dshi_2419"/>
<dbReference type="KEGG" id="dsh:Dshi_2419"/>
<dbReference type="eggNOG" id="COG1181">
    <property type="taxonomic scope" value="Bacteria"/>
</dbReference>
<dbReference type="HOGENOM" id="CLU_039268_1_1_5"/>
<dbReference type="UniPathway" id="UPA00219"/>
<dbReference type="Proteomes" id="UP000006833">
    <property type="component" value="Chromosome"/>
</dbReference>
<dbReference type="GO" id="GO:0005737">
    <property type="term" value="C:cytoplasm"/>
    <property type="evidence" value="ECO:0007669"/>
    <property type="project" value="UniProtKB-SubCell"/>
</dbReference>
<dbReference type="GO" id="GO:0005524">
    <property type="term" value="F:ATP binding"/>
    <property type="evidence" value="ECO:0007669"/>
    <property type="project" value="UniProtKB-KW"/>
</dbReference>
<dbReference type="GO" id="GO:0008716">
    <property type="term" value="F:D-alanine-D-alanine ligase activity"/>
    <property type="evidence" value="ECO:0007669"/>
    <property type="project" value="UniProtKB-UniRule"/>
</dbReference>
<dbReference type="GO" id="GO:0046872">
    <property type="term" value="F:metal ion binding"/>
    <property type="evidence" value="ECO:0007669"/>
    <property type="project" value="UniProtKB-KW"/>
</dbReference>
<dbReference type="GO" id="GO:0071555">
    <property type="term" value="P:cell wall organization"/>
    <property type="evidence" value="ECO:0007669"/>
    <property type="project" value="UniProtKB-KW"/>
</dbReference>
<dbReference type="GO" id="GO:0009252">
    <property type="term" value="P:peptidoglycan biosynthetic process"/>
    <property type="evidence" value="ECO:0007669"/>
    <property type="project" value="UniProtKB-UniRule"/>
</dbReference>
<dbReference type="GO" id="GO:0008360">
    <property type="term" value="P:regulation of cell shape"/>
    <property type="evidence" value="ECO:0007669"/>
    <property type="project" value="UniProtKB-KW"/>
</dbReference>
<dbReference type="Gene3D" id="3.40.50.20">
    <property type="match status" value="1"/>
</dbReference>
<dbReference type="Gene3D" id="3.30.1490.20">
    <property type="entry name" value="ATP-grasp fold, A domain"/>
    <property type="match status" value="1"/>
</dbReference>
<dbReference type="Gene3D" id="3.30.470.20">
    <property type="entry name" value="ATP-grasp fold, B domain"/>
    <property type="match status" value="1"/>
</dbReference>
<dbReference type="HAMAP" id="MF_00047">
    <property type="entry name" value="Dala_Dala_lig"/>
    <property type="match status" value="1"/>
</dbReference>
<dbReference type="InterPro" id="IPR011761">
    <property type="entry name" value="ATP-grasp"/>
</dbReference>
<dbReference type="InterPro" id="IPR013815">
    <property type="entry name" value="ATP_grasp_subdomain_1"/>
</dbReference>
<dbReference type="InterPro" id="IPR000291">
    <property type="entry name" value="D-Ala_lig_Van_CS"/>
</dbReference>
<dbReference type="InterPro" id="IPR005905">
    <property type="entry name" value="D_ala_D_ala"/>
</dbReference>
<dbReference type="InterPro" id="IPR011095">
    <property type="entry name" value="Dala_Dala_lig_C"/>
</dbReference>
<dbReference type="InterPro" id="IPR011127">
    <property type="entry name" value="Dala_Dala_lig_N"/>
</dbReference>
<dbReference type="InterPro" id="IPR016185">
    <property type="entry name" value="PreATP-grasp_dom_sf"/>
</dbReference>
<dbReference type="NCBIfam" id="NF002378">
    <property type="entry name" value="PRK01372.1"/>
    <property type="match status" value="1"/>
</dbReference>
<dbReference type="PANTHER" id="PTHR23132">
    <property type="entry name" value="D-ALANINE--D-ALANINE LIGASE"/>
    <property type="match status" value="1"/>
</dbReference>
<dbReference type="PANTHER" id="PTHR23132:SF23">
    <property type="entry name" value="D-ALANINE--D-ALANINE LIGASE B"/>
    <property type="match status" value="1"/>
</dbReference>
<dbReference type="Pfam" id="PF07478">
    <property type="entry name" value="Dala_Dala_lig_C"/>
    <property type="match status" value="1"/>
</dbReference>
<dbReference type="Pfam" id="PF01820">
    <property type="entry name" value="Dala_Dala_lig_N"/>
    <property type="match status" value="1"/>
</dbReference>
<dbReference type="PIRSF" id="PIRSF039102">
    <property type="entry name" value="Ddl/VanB"/>
    <property type="match status" value="1"/>
</dbReference>
<dbReference type="SUPFAM" id="SSF56059">
    <property type="entry name" value="Glutathione synthetase ATP-binding domain-like"/>
    <property type="match status" value="1"/>
</dbReference>
<dbReference type="SUPFAM" id="SSF52440">
    <property type="entry name" value="PreATP-grasp domain"/>
    <property type="match status" value="1"/>
</dbReference>
<dbReference type="PROSITE" id="PS50975">
    <property type="entry name" value="ATP_GRASP"/>
    <property type="match status" value="1"/>
</dbReference>
<dbReference type="PROSITE" id="PS00843">
    <property type="entry name" value="DALA_DALA_LIGASE_1"/>
    <property type="match status" value="1"/>
</dbReference>
<dbReference type="PROSITE" id="PS00844">
    <property type="entry name" value="DALA_DALA_LIGASE_2"/>
    <property type="match status" value="1"/>
</dbReference>
<organism>
    <name type="scientific">Dinoroseobacter shibae (strain DSM 16493 / NCIMB 14021 / DFL 12)</name>
    <dbReference type="NCBI Taxonomy" id="398580"/>
    <lineage>
        <taxon>Bacteria</taxon>
        <taxon>Pseudomonadati</taxon>
        <taxon>Pseudomonadota</taxon>
        <taxon>Alphaproteobacteria</taxon>
        <taxon>Rhodobacterales</taxon>
        <taxon>Roseobacteraceae</taxon>
        <taxon>Dinoroseobacter</taxon>
    </lineage>
</organism>
<feature type="chain" id="PRO_1000074774" description="D-alanine--D-alanine ligase">
    <location>
        <begin position="1"/>
        <end position="308"/>
    </location>
</feature>
<feature type="domain" description="ATP-grasp" evidence="2">
    <location>
        <begin position="109"/>
        <end position="302"/>
    </location>
</feature>
<feature type="binding site" evidence="2">
    <location>
        <begin position="136"/>
        <end position="186"/>
    </location>
    <ligand>
        <name>ATP</name>
        <dbReference type="ChEBI" id="CHEBI:30616"/>
    </ligand>
</feature>
<feature type="binding site" evidence="2">
    <location>
        <position position="253"/>
    </location>
    <ligand>
        <name>Mg(2+)</name>
        <dbReference type="ChEBI" id="CHEBI:18420"/>
        <label>1</label>
    </ligand>
</feature>
<feature type="binding site" evidence="2">
    <location>
        <position position="269"/>
    </location>
    <ligand>
        <name>Mg(2+)</name>
        <dbReference type="ChEBI" id="CHEBI:18420"/>
        <label>1</label>
    </ligand>
</feature>
<feature type="binding site" evidence="2">
    <location>
        <position position="269"/>
    </location>
    <ligand>
        <name>Mg(2+)</name>
        <dbReference type="ChEBI" id="CHEBI:18420"/>
        <label>2</label>
    </ligand>
</feature>
<feature type="binding site" evidence="2">
    <location>
        <position position="271"/>
    </location>
    <ligand>
        <name>Mg(2+)</name>
        <dbReference type="ChEBI" id="CHEBI:18420"/>
        <label>2</label>
    </ligand>
</feature>
<gene>
    <name evidence="2" type="primary">ddl</name>
    <name type="ordered locus">Dshi_2419</name>
</gene>
<accession>A8LS60</accession>